<comment type="function">
    <text evidence="1">One of the primary rRNA binding proteins, it binds directly to 16S rRNA where it helps nucleate assembly of the platform of the 30S subunit by binding and bridging several RNA helices of the 16S rRNA.</text>
</comment>
<comment type="function">
    <text evidence="1">Forms an intersubunit bridge (bridge B4) with the 23S rRNA of the 50S subunit in the ribosome.</text>
</comment>
<comment type="subunit">
    <text evidence="1">Part of the 30S ribosomal subunit. Forms a bridge to the 50S subunit in the 70S ribosome, contacting the 23S rRNA.</text>
</comment>
<comment type="similarity">
    <text evidence="1">Belongs to the universal ribosomal protein uS15 family.</text>
</comment>
<feature type="chain" id="PRO_0000115422" description="Small ribosomal subunit protein uS15">
    <location>
        <begin position="1"/>
        <end position="89"/>
    </location>
</feature>
<organism>
    <name type="scientific">Corynebacterium efficiens (strain DSM 44549 / YS-314 / AJ 12310 / JCM 11189 / NBRC 100395)</name>
    <dbReference type="NCBI Taxonomy" id="196164"/>
    <lineage>
        <taxon>Bacteria</taxon>
        <taxon>Bacillati</taxon>
        <taxon>Actinomycetota</taxon>
        <taxon>Actinomycetes</taxon>
        <taxon>Mycobacteriales</taxon>
        <taxon>Corynebacteriaceae</taxon>
        <taxon>Corynebacterium</taxon>
    </lineage>
</organism>
<reference key="1">
    <citation type="journal article" date="2003" name="Genome Res.">
        <title>Comparative complete genome sequence analysis of the amino acid replacements responsible for the thermostability of Corynebacterium efficiens.</title>
        <authorList>
            <person name="Nishio Y."/>
            <person name="Nakamura Y."/>
            <person name="Kawarabayasi Y."/>
            <person name="Usuda Y."/>
            <person name="Kimura E."/>
            <person name="Sugimoto S."/>
            <person name="Matsui K."/>
            <person name="Yamagishi A."/>
            <person name="Kikuchi H."/>
            <person name="Ikeo K."/>
            <person name="Gojobori T."/>
        </authorList>
    </citation>
    <scope>NUCLEOTIDE SEQUENCE [LARGE SCALE GENOMIC DNA]</scope>
    <source>
        <strain>DSM 44549 / YS-314 / AJ 12310 / JCM 11189 / NBRC 100395</strain>
    </source>
</reference>
<gene>
    <name evidence="1" type="primary">rpsO</name>
    <name type="ordered locus">CE1869</name>
</gene>
<accession>Q8FPB6</accession>
<evidence type="ECO:0000255" key="1">
    <source>
        <dbReference type="HAMAP-Rule" id="MF_01343"/>
    </source>
</evidence>
<evidence type="ECO:0000305" key="2"/>
<sequence>MALTSEQKKSILAEYGLHETDTGSPEAQIAMLTNRINTLTEHLKFHKHDHHSRRGLLLLVGRRRGLLKYLADNNVDRYRDLIARLGLRR</sequence>
<proteinExistence type="inferred from homology"/>
<dbReference type="EMBL" id="BA000035">
    <property type="protein sequence ID" value="BAC18679.1"/>
    <property type="molecule type" value="Genomic_DNA"/>
</dbReference>
<dbReference type="RefSeq" id="WP_006767869.1">
    <property type="nucleotide sequence ID" value="NZ_GG700683.1"/>
</dbReference>
<dbReference type="SMR" id="Q8FPB6"/>
<dbReference type="STRING" id="196164.gene:10742297"/>
<dbReference type="KEGG" id="cef:CE1869"/>
<dbReference type="eggNOG" id="COG0184">
    <property type="taxonomic scope" value="Bacteria"/>
</dbReference>
<dbReference type="HOGENOM" id="CLU_148518_0_0_11"/>
<dbReference type="OrthoDB" id="9799262at2"/>
<dbReference type="Proteomes" id="UP000001409">
    <property type="component" value="Chromosome"/>
</dbReference>
<dbReference type="GO" id="GO:0022627">
    <property type="term" value="C:cytosolic small ribosomal subunit"/>
    <property type="evidence" value="ECO:0007669"/>
    <property type="project" value="TreeGrafter"/>
</dbReference>
<dbReference type="GO" id="GO:0019843">
    <property type="term" value="F:rRNA binding"/>
    <property type="evidence" value="ECO:0007669"/>
    <property type="project" value="UniProtKB-UniRule"/>
</dbReference>
<dbReference type="GO" id="GO:0003735">
    <property type="term" value="F:structural constituent of ribosome"/>
    <property type="evidence" value="ECO:0007669"/>
    <property type="project" value="InterPro"/>
</dbReference>
<dbReference type="GO" id="GO:0006412">
    <property type="term" value="P:translation"/>
    <property type="evidence" value="ECO:0007669"/>
    <property type="project" value="UniProtKB-UniRule"/>
</dbReference>
<dbReference type="CDD" id="cd00353">
    <property type="entry name" value="Ribosomal_S15p_S13e"/>
    <property type="match status" value="1"/>
</dbReference>
<dbReference type="FunFam" id="1.10.287.10:FF:000002">
    <property type="entry name" value="30S ribosomal protein S15"/>
    <property type="match status" value="1"/>
</dbReference>
<dbReference type="Gene3D" id="6.10.250.3130">
    <property type="match status" value="1"/>
</dbReference>
<dbReference type="Gene3D" id="1.10.287.10">
    <property type="entry name" value="S15/NS1, RNA-binding"/>
    <property type="match status" value="1"/>
</dbReference>
<dbReference type="HAMAP" id="MF_01343_B">
    <property type="entry name" value="Ribosomal_uS15_B"/>
    <property type="match status" value="1"/>
</dbReference>
<dbReference type="InterPro" id="IPR000589">
    <property type="entry name" value="Ribosomal_uS15"/>
</dbReference>
<dbReference type="InterPro" id="IPR005290">
    <property type="entry name" value="Ribosomal_uS15_bac-type"/>
</dbReference>
<dbReference type="InterPro" id="IPR009068">
    <property type="entry name" value="uS15_NS1_RNA-bd_sf"/>
</dbReference>
<dbReference type="NCBIfam" id="TIGR00952">
    <property type="entry name" value="S15_bact"/>
    <property type="match status" value="1"/>
</dbReference>
<dbReference type="PANTHER" id="PTHR23321">
    <property type="entry name" value="RIBOSOMAL PROTEIN S15, BACTERIAL AND ORGANELLAR"/>
    <property type="match status" value="1"/>
</dbReference>
<dbReference type="PANTHER" id="PTHR23321:SF26">
    <property type="entry name" value="SMALL RIBOSOMAL SUBUNIT PROTEIN US15M"/>
    <property type="match status" value="1"/>
</dbReference>
<dbReference type="Pfam" id="PF00312">
    <property type="entry name" value="Ribosomal_S15"/>
    <property type="match status" value="1"/>
</dbReference>
<dbReference type="SMART" id="SM01387">
    <property type="entry name" value="Ribosomal_S15"/>
    <property type="match status" value="1"/>
</dbReference>
<dbReference type="SUPFAM" id="SSF47060">
    <property type="entry name" value="S15/NS1 RNA-binding domain"/>
    <property type="match status" value="1"/>
</dbReference>
<dbReference type="PROSITE" id="PS00362">
    <property type="entry name" value="RIBOSOMAL_S15"/>
    <property type="match status" value="1"/>
</dbReference>
<name>RS15_COREF</name>
<keyword id="KW-1185">Reference proteome</keyword>
<keyword id="KW-0687">Ribonucleoprotein</keyword>
<keyword id="KW-0689">Ribosomal protein</keyword>
<keyword id="KW-0694">RNA-binding</keyword>
<keyword id="KW-0699">rRNA-binding</keyword>
<protein>
    <recommendedName>
        <fullName evidence="1">Small ribosomal subunit protein uS15</fullName>
    </recommendedName>
    <alternativeName>
        <fullName evidence="2">30S ribosomal protein S15</fullName>
    </alternativeName>
</protein>